<proteinExistence type="evidence at protein level"/>
<name>KIRR2_MOUSE</name>
<protein>
    <recommendedName>
        <fullName>Kin of IRRE-like protein 2</fullName>
    </recommendedName>
    <alternativeName>
        <fullName>Kin of irregular chiasm-like protein 2</fullName>
    </alternativeName>
</protein>
<gene>
    <name type="primary">Kirrel2</name>
    <name type="synonym">Neph3</name>
</gene>
<accession>Q7TSU7</accession>
<accession>Q7TQ98</accession>
<reference key="1">
    <citation type="journal article" date="2004" name="Genome Res.">
        <title>The status, quality, and expansion of the NIH full-length cDNA project: the Mammalian Gene Collection (MGC).</title>
        <authorList>
            <consortium name="The MGC Project Team"/>
        </authorList>
    </citation>
    <scope>NUCLEOTIDE SEQUENCE [LARGE SCALE MRNA] (ISOFORM 1)</scope>
    <source>
        <tissue>Olfactory epithelium</tissue>
    </source>
</reference>
<reference key="2">
    <citation type="journal article" date="2003" name="Genomics">
        <title>Kirrel2, a novel immunoglobulin superfamily gene expressed primarily in beta cells of the pancreatic islets.</title>
        <authorList>
            <person name="Sun C."/>
            <person name="Kilburn D."/>
            <person name="Lukashin A."/>
            <person name="Crowell T."/>
            <person name="Gardner H."/>
            <person name="Brundiers R."/>
            <person name="Diefenbach B."/>
            <person name="Carulli J.P."/>
        </authorList>
    </citation>
    <scope>NUCLEOTIDE SEQUENCE [MRNA] OF 48-376 (ISOFORM 2)</scope>
    <scope>TISSUE SPECIFICITY</scope>
</reference>
<reference key="3">
    <citation type="journal article" date="2003" name="FASEB J.">
        <title>NEPH1 defines a novel family of podocin interacting proteins.</title>
        <authorList>
            <person name="Sellin L."/>
            <person name="Huber T.B."/>
            <person name="Gerke P."/>
            <person name="Quack I."/>
            <person name="Pavenstaedt H."/>
            <person name="Walz G."/>
        </authorList>
    </citation>
    <scope>INTERACTION WITH NPHS2</scope>
    <scope>TISSUE SPECIFICITY</scope>
    <source>
        <strain>Swiss Webster</strain>
        <tissue>Brain</tissue>
    </source>
</reference>
<reference key="4">
    <citation type="journal article" date="2010" name="J. Biol. Chem.">
        <title>Ptf1a directly controls expression of immunoglobulin superfamily molecules Nephrin and Neph3 in the developing central nervous system.</title>
        <authorList>
            <person name="Nishida K."/>
            <person name="Hoshino M."/>
            <person name="Kawaguchi Y."/>
            <person name="Murakami F."/>
        </authorList>
    </citation>
    <scope>INTERACTION WITH NPHS1</scope>
    <scope>TISSUE SPECIFICITY</scope>
</reference>
<reference key="5">
    <citation type="journal article" date="2015" name="J. Biol. Chem.">
        <title>Kin of IRRE-like protein 2 is a phosphorylated glycoprotein that regulates basal insulin secretion.</title>
        <authorList>
            <person name="Yesildag B."/>
            <person name="Bock T."/>
            <person name="Herrmanns K."/>
            <person name="Wollscheid B."/>
            <person name="Stoffel M."/>
        </authorList>
    </citation>
    <scope>SUBCELLULAR LOCATION</scope>
    <scope>GLYCOSYLATION</scope>
    <scope>INTERACTION WITH FYN</scope>
    <scope>PHOSPHORYLATION AT SER-563; TYR-595; TYR-596 AND TYR-653</scope>
    <scope>SUBUNIT</scope>
    <scope>PROTEOLYTIC PROCESSING</scope>
    <scope>DISRUPTION PHENOTYPE</scope>
    <scope>IDENTIFICATION BY MASS SPECTROMETRY</scope>
    <scope>MUTAGENESIS OF 595-TYR-TYR-596; 631-TYR-TYR-632 AND TYR-653</scope>
</reference>
<keyword id="KW-0002">3D-structure</keyword>
<keyword id="KW-0025">Alternative splicing</keyword>
<keyword id="KW-1003">Cell membrane</keyword>
<keyword id="KW-1015">Disulfide bond</keyword>
<keyword id="KW-0325">Glycoprotein</keyword>
<keyword id="KW-0393">Immunoglobulin domain</keyword>
<keyword id="KW-0472">Membrane</keyword>
<keyword id="KW-0597">Phosphoprotein</keyword>
<keyword id="KW-1185">Reference proteome</keyword>
<keyword id="KW-0677">Repeat</keyword>
<keyword id="KW-0732">Signal</keyword>
<keyword id="KW-0812">Transmembrane</keyword>
<keyword id="KW-1133">Transmembrane helix</keyword>
<comment type="function">
    <text evidence="7">May regulate basal insulin secretion.</text>
</comment>
<comment type="subunit">
    <text evidence="4 6 7">Homodimer (PubMed:26324709). Interacts with NPHS2/podocin (via the C-terminus). Interacts with NPHS1 (via the Ig-like domains). Interacts with FYN (PubMed:26324709).</text>
</comment>
<comment type="subcellular location">
    <subcellularLocation>
        <location evidence="7">Cell membrane</location>
        <topology evidence="9">Single-pass type I membrane protein</topology>
    </subcellularLocation>
    <text evidence="7">Localized along the sites of the cell contacts (PubMed:26324709). Colocalizes with E-Cadherin and beta-catenin (PubMed:26324709).</text>
</comment>
<comment type="alternative products">
    <event type="alternative splicing"/>
    <isoform>
        <id>Q7TSU7-1</id>
        <name>1</name>
        <sequence type="displayed"/>
    </isoform>
    <isoform>
        <id>Q7TSU7-2</id>
        <name>2</name>
        <sequence type="described" ref="VSP_011786"/>
    </isoform>
</comment>
<comment type="tissue specificity">
    <text evidence="4 5 6">Highly expressed in beta-cells of the pancreatic islets. Expression is seen in podocytes of kidney glomeruli, and in the cerebellum and hindbrain at 12.5 dpc, in the spinal cord at 10.5 dpc, and in retina and hypothalamus at 13.5 dpc.</text>
</comment>
<comment type="PTM">
    <text evidence="7">N-glycosylated.</text>
</comment>
<comment type="PTM">
    <text evidence="7">Phosphorylated at Ser-548 or Ser-549; due to site ambiguity, the exact position of the serine phosphorylation could not be determined. Phosphorylation at residues Tyr-631 and/or Tyr-632. FYN mediates tyrosine phosphorylation in pancreatic beta-cells.</text>
</comment>
<comment type="PTM">
    <text evidence="7">The extracellular domain is cleaved leading to the generation of a soluble fragment and a membrane-bound C-terminal fragment, which is further cleaved by gamma-secretase.</text>
</comment>
<comment type="disruption phenotype">
    <text evidence="7">No visible phenotype. However basal insulin secretion is modestly increased in pancreatic islets of KIRREL2 deficient mice.</text>
</comment>
<comment type="similarity">
    <text evidence="9">Belongs to the immunoglobulin superfamily.</text>
</comment>
<evidence type="ECO:0000255" key="1"/>
<evidence type="ECO:0000255" key="2">
    <source>
        <dbReference type="PROSITE-ProRule" id="PRU00114"/>
    </source>
</evidence>
<evidence type="ECO:0000256" key="3">
    <source>
        <dbReference type="SAM" id="MobiDB-lite"/>
    </source>
</evidence>
<evidence type="ECO:0000269" key="4">
    <source>
    </source>
</evidence>
<evidence type="ECO:0000269" key="5">
    <source>
    </source>
</evidence>
<evidence type="ECO:0000269" key="6">
    <source>
    </source>
</evidence>
<evidence type="ECO:0000269" key="7">
    <source>
    </source>
</evidence>
<evidence type="ECO:0000303" key="8">
    <source>
    </source>
</evidence>
<evidence type="ECO:0000305" key="9"/>
<evidence type="ECO:0007829" key="10">
    <source>
        <dbReference type="PDB" id="7LTW"/>
    </source>
</evidence>
<sequence>MLASALLVFLCCFKGHAGSSPHFLQQPEDMVVLLGEEARLPCALGAYRGLVQWTKDGLALGGERDLPGWSRYWISGNSASGQHDLHIKPVELEDEASYECQASQAGLRSRPAQLHVMVPPEAPQVLGGPSVSLVAGVPGNLTCRSRGDSRPAPELLWFRDGIRLDGSSFHQTTLKDKATGTVENTLFLTPSSHDDGATLICRARSQALPTGRDTAVTLSLQYPPMVTLSAEPQTVQEGEKVTFLCQATAQPPVTGYRWAKGGSPVLGARGPRLEVVADATFLTEPVSCEVSNAVGSANRSTALEVLYGPILQAKPKSVSVDVGKDASFSCVWRGNPLPRITWTRMGGSQVLSSGPTLRLPSVALEDAGDYVCRAEPRRTGLGGGKAQARLTVNAPPVVTALQPAPAFLRGPARLQCVVFASPAPDSVVWSWDEGFLEAGSLGRFLVEAFPAPEVEGGQGPGLISVLHISGTQESDFTTGFNCSARNRLGEGRVQIHLGRRDLLPTVRIVAGAASAATSLLMVITGVVLCCWRHGSLSKQKNLVRIPGSSEGSSSRGPEEETGSSEDRGPIVHTDHSDLVLEEKEALETKDPTNGYYRVRGVSVSLSLGEAPGGGLFLPPPSPIGLPGTPTYYDFKPHLDLVPPCRLYRARAGYLTTPHPRAFTSYMKPTSFGPPELSSGTPPFPYATLSPPSHQRLQTHV</sequence>
<dbReference type="EMBL" id="BC052773">
    <property type="protein sequence ID" value="AAH52773.1"/>
    <property type="molecule type" value="mRNA"/>
</dbReference>
<dbReference type="EMBL" id="AY305303">
    <property type="protein sequence ID" value="AAP72168.1"/>
    <property type="molecule type" value="mRNA"/>
</dbReference>
<dbReference type="CCDS" id="CCDS39883.1">
    <molecule id="Q7TSU7-1"/>
</dbReference>
<dbReference type="RefSeq" id="NP_766486.1">
    <molecule id="Q7TSU7-1"/>
    <property type="nucleotide sequence ID" value="NM_172898.3"/>
</dbReference>
<dbReference type="RefSeq" id="XP_036008988.1">
    <molecule id="Q7TSU7-1"/>
    <property type="nucleotide sequence ID" value="XM_036153095.1"/>
</dbReference>
<dbReference type="PDB" id="7LTW">
    <property type="method" value="X-ray"/>
    <property type="resolution" value="1.80 A"/>
    <property type="chains" value="A/B=22-119"/>
</dbReference>
<dbReference type="PDBsum" id="7LTW"/>
<dbReference type="SASBDB" id="Q7TSU7"/>
<dbReference type="SMR" id="Q7TSU7"/>
<dbReference type="FunCoup" id="Q7TSU7">
    <property type="interactions" value="21"/>
</dbReference>
<dbReference type="STRING" id="10090.ENSMUSP00000039395"/>
<dbReference type="GlyCosmos" id="Q7TSU7">
    <property type="glycosylation" value="3 sites, No reported glycans"/>
</dbReference>
<dbReference type="GlyGen" id="Q7TSU7">
    <property type="glycosylation" value="4 sites, 2 N-linked glycans (2 sites)"/>
</dbReference>
<dbReference type="iPTMnet" id="Q7TSU7"/>
<dbReference type="PhosphoSitePlus" id="Q7TSU7"/>
<dbReference type="PaxDb" id="10090-ENSMUSP00000039395"/>
<dbReference type="ProteomicsDB" id="264995">
    <molecule id="Q7TSU7-1"/>
</dbReference>
<dbReference type="ProteomicsDB" id="264996">
    <molecule id="Q7TSU7-2"/>
</dbReference>
<dbReference type="Antibodypedia" id="29564">
    <property type="antibodies" value="273 antibodies from 30 providers"/>
</dbReference>
<dbReference type="DNASU" id="243911"/>
<dbReference type="Ensembl" id="ENSMUST00000045817.14">
    <molecule id="Q7TSU7-1"/>
    <property type="protein sequence ID" value="ENSMUSP00000039395.8"/>
    <property type="gene ID" value="ENSMUSG00000036915.18"/>
</dbReference>
<dbReference type="GeneID" id="243911"/>
<dbReference type="KEGG" id="mmu:243911"/>
<dbReference type="UCSC" id="uc009gel.1">
    <molecule id="Q7TSU7-1"/>
    <property type="organism name" value="mouse"/>
</dbReference>
<dbReference type="UCSC" id="uc012fho.1">
    <molecule id="Q7TSU7-2"/>
    <property type="organism name" value="mouse"/>
</dbReference>
<dbReference type="AGR" id="MGI:2442334"/>
<dbReference type="CTD" id="84063"/>
<dbReference type="MGI" id="MGI:2442334">
    <property type="gene designation" value="Kirrel2"/>
</dbReference>
<dbReference type="VEuPathDB" id="HostDB:ENSMUSG00000036915"/>
<dbReference type="eggNOG" id="KOG3510">
    <property type="taxonomic scope" value="Eukaryota"/>
</dbReference>
<dbReference type="GeneTree" id="ENSGT00940000160603"/>
<dbReference type="HOGENOM" id="CLU_013520_1_1_1"/>
<dbReference type="InParanoid" id="Q7TSU7"/>
<dbReference type="OMA" id="TNFTCQA"/>
<dbReference type="OrthoDB" id="6413693at2759"/>
<dbReference type="PhylomeDB" id="Q7TSU7"/>
<dbReference type="TreeFam" id="TF327139"/>
<dbReference type="Reactome" id="R-MMU-373753">
    <property type="pathway name" value="Nephrin family interactions"/>
</dbReference>
<dbReference type="BioGRID-ORCS" id="243911">
    <property type="hits" value="0 hits in 77 CRISPR screens"/>
</dbReference>
<dbReference type="PRO" id="PR:Q7TSU7"/>
<dbReference type="Proteomes" id="UP000000589">
    <property type="component" value="Chromosome 7"/>
</dbReference>
<dbReference type="RNAct" id="Q7TSU7">
    <property type="molecule type" value="protein"/>
</dbReference>
<dbReference type="Bgee" id="ENSMUSG00000036915">
    <property type="expression patterns" value="Expressed in spinal cord ventricular layer and 44 other cell types or tissues"/>
</dbReference>
<dbReference type="ExpressionAtlas" id="Q7TSU7">
    <property type="expression patterns" value="baseline and differential"/>
</dbReference>
<dbReference type="GO" id="GO:0005911">
    <property type="term" value="C:cell-cell junction"/>
    <property type="evidence" value="ECO:0000314"/>
    <property type="project" value="UniProtKB"/>
</dbReference>
<dbReference type="GO" id="GO:0005886">
    <property type="term" value="C:plasma membrane"/>
    <property type="evidence" value="ECO:0000314"/>
    <property type="project" value="UniProtKB"/>
</dbReference>
<dbReference type="GO" id="GO:0036057">
    <property type="term" value="C:slit diaphragm"/>
    <property type="evidence" value="ECO:0000314"/>
    <property type="project" value="MGI"/>
</dbReference>
<dbReference type="GO" id="GO:0042802">
    <property type="term" value="F:identical protein binding"/>
    <property type="evidence" value="ECO:0000314"/>
    <property type="project" value="UniProtKB"/>
</dbReference>
<dbReference type="GO" id="GO:0098609">
    <property type="term" value="P:cell-cell adhesion"/>
    <property type="evidence" value="ECO:0000316"/>
    <property type="project" value="MGI"/>
</dbReference>
<dbReference type="FunFam" id="2.60.40.10:FF:000896">
    <property type="entry name" value="kin of IRRE-like protein 2 isoform X2"/>
    <property type="match status" value="1"/>
</dbReference>
<dbReference type="FunFam" id="2.60.40.10:FF:000077">
    <property type="entry name" value="Kirre like nephrin family adhesion molecule 3"/>
    <property type="match status" value="1"/>
</dbReference>
<dbReference type="FunFam" id="2.60.40.10:FF:000103">
    <property type="entry name" value="Kirre like nephrin family adhesion molecule 3"/>
    <property type="match status" value="1"/>
</dbReference>
<dbReference type="Gene3D" id="2.60.40.10">
    <property type="entry name" value="Immunoglobulins"/>
    <property type="match status" value="5"/>
</dbReference>
<dbReference type="InterPro" id="IPR013162">
    <property type="entry name" value="CD80_C2-set"/>
</dbReference>
<dbReference type="InterPro" id="IPR051275">
    <property type="entry name" value="Cell_adhesion_signaling"/>
</dbReference>
<dbReference type="InterPro" id="IPR007110">
    <property type="entry name" value="Ig-like_dom"/>
</dbReference>
<dbReference type="InterPro" id="IPR036179">
    <property type="entry name" value="Ig-like_dom_sf"/>
</dbReference>
<dbReference type="InterPro" id="IPR013783">
    <property type="entry name" value="Ig-like_fold"/>
</dbReference>
<dbReference type="InterPro" id="IPR003599">
    <property type="entry name" value="Ig_sub"/>
</dbReference>
<dbReference type="InterPro" id="IPR003598">
    <property type="entry name" value="Ig_sub2"/>
</dbReference>
<dbReference type="PANTHER" id="PTHR11640:SF51">
    <property type="entry name" value="KIN OF IRRE-LIKE PROTEIN 2"/>
    <property type="match status" value="1"/>
</dbReference>
<dbReference type="PANTHER" id="PTHR11640">
    <property type="entry name" value="NEPHRIN"/>
    <property type="match status" value="1"/>
</dbReference>
<dbReference type="Pfam" id="PF08205">
    <property type="entry name" value="C2-set_2"/>
    <property type="match status" value="1"/>
</dbReference>
<dbReference type="Pfam" id="PF13927">
    <property type="entry name" value="Ig_3"/>
    <property type="match status" value="2"/>
</dbReference>
<dbReference type="SMART" id="SM00409">
    <property type="entry name" value="IG"/>
    <property type="match status" value="5"/>
</dbReference>
<dbReference type="SMART" id="SM00408">
    <property type="entry name" value="IGc2"/>
    <property type="match status" value="3"/>
</dbReference>
<dbReference type="SUPFAM" id="SSF48726">
    <property type="entry name" value="Immunoglobulin"/>
    <property type="match status" value="5"/>
</dbReference>
<dbReference type="PROSITE" id="PS50835">
    <property type="entry name" value="IG_LIKE"/>
    <property type="match status" value="4"/>
</dbReference>
<feature type="signal peptide" evidence="1">
    <location>
        <begin position="1"/>
        <end position="19"/>
    </location>
</feature>
<feature type="chain" id="PRO_0000015097" description="Kin of IRRE-like protein 2">
    <location>
        <begin position="20"/>
        <end position="700"/>
    </location>
</feature>
<feature type="topological domain" description="Extracellular" evidence="1">
    <location>
        <begin position="20"/>
        <end position="507"/>
    </location>
</feature>
<feature type="transmembrane region" description="Helical" evidence="1">
    <location>
        <begin position="508"/>
        <end position="528"/>
    </location>
</feature>
<feature type="topological domain" description="Cytoplasmic" evidence="1">
    <location>
        <begin position="529"/>
        <end position="700"/>
    </location>
</feature>
<feature type="domain" description="Ig-like C2-type 1">
    <location>
        <begin position="21"/>
        <end position="115"/>
    </location>
</feature>
<feature type="domain" description="Ig-like C2-type 2">
    <location>
        <begin position="120"/>
        <end position="219"/>
    </location>
</feature>
<feature type="domain" description="Ig-like C2-type 3">
    <location>
        <begin position="224"/>
        <end position="304"/>
    </location>
</feature>
<feature type="domain" description="Ig-like C2-type 4">
    <location>
        <begin position="309"/>
        <end position="391"/>
    </location>
</feature>
<feature type="domain" description="Ig-like C2-type 5">
    <location>
        <begin position="395"/>
        <end position="497"/>
    </location>
</feature>
<feature type="region of interest" description="Disordered" evidence="3">
    <location>
        <begin position="542"/>
        <end position="576"/>
    </location>
</feature>
<feature type="region of interest" description="Disordered" evidence="3">
    <location>
        <begin position="671"/>
        <end position="700"/>
    </location>
</feature>
<feature type="short sequence motif" description="Cell attachment site" evidence="1">
    <location>
        <begin position="146"/>
        <end position="148"/>
    </location>
</feature>
<feature type="compositionally biased region" description="Basic and acidic residues" evidence="3">
    <location>
        <begin position="564"/>
        <end position="576"/>
    </location>
</feature>
<feature type="compositionally biased region" description="Polar residues" evidence="3">
    <location>
        <begin position="689"/>
        <end position="700"/>
    </location>
</feature>
<feature type="modified residue" description="Phosphoserine" evidence="7">
    <location>
        <position position="563"/>
    </location>
</feature>
<feature type="modified residue" description="Phosphotyrosine" evidence="7">
    <location>
        <position position="595"/>
    </location>
</feature>
<feature type="modified residue" description="Phosphotyrosine" evidence="7">
    <location>
        <position position="596"/>
    </location>
</feature>
<feature type="modified residue" description="Phosphotyrosine" evidence="7">
    <location>
        <position position="653"/>
    </location>
</feature>
<feature type="glycosylation site" description="N-linked (GlcNAc...) asparagine" evidence="1">
    <location>
        <position position="140"/>
    </location>
</feature>
<feature type="glycosylation site" description="N-linked (GlcNAc...) asparagine" evidence="1">
    <location>
        <position position="298"/>
    </location>
</feature>
<feature type="glycosylation site" description="N-linked (GlcNAc...) asparagine" evidence="1">
    <location>
        <position position="481"/>
    </location>
</feature>
<feature type="disulfide bond" evidence="2">
    <location>
        <begin position="42"/>
        <end position="100"/>
    </location>
</feature>
<feature type="disulfide bond" evidence="2">
    <location>
        <begin position="143"/>
        <end position="201"/>
    </location>
</feature>
<feature type="disulfide bond" evidence="2">
    <location>
        <begin position="245"/>
        <end position="288"/>
    </location>
</feature>
<feature type="disulfide bond" evidence="2">
    <location>
        <begin position="330"/>
        <end position="372"/>
    </location>
</feature>
<feature type="disulfide bond" evidence="2">
    <location>
        <begin position="416"/>
        <end position="482"/>
    </location>
</feature>
<feature type="splice variant" id="VSP_011786" description="In isoform 2." evidence="8">
    <location>
        <begin position="118"/>
        <end position="136"/>
    </location>
</feature>
<feature type="mutagenesis site" description="Enhances stability. Modifies the structure of cell contacts. Localization at the plasma membrane is increased. Does not affect dimerization. No change in shedding activity." evidence="7">
    <original>YY</original>
    <variation>FF</variation>
    <location>
        <begin position="595"/>
        <end position="596"/>
    </location>
</feature>
<feature type="mutagenesis site" description="Does not modify the structure of cell contacts. No effect on localization at the plasma membrane. No change in shedding activity." evidence="7">
    <original>YY</original>
    <variation>FF</variation>
    <location>
        <begin position="631"/>
        <end position="632"/>
    </location>
</feature>
<feature type="mutagenesis site" description="Does not modify the structure of cell contacts. No effect on localization at the plasma membrane. No change in shedding activity." evidence="7">
    <original>Y</original>
    <variation>F</variation>
    <location>
        <position position="653"/>
    </location>
</feature>
<feature type="sequence conflict" description="In Ref. 2." evidence="9" ref="2">
    <original>R</original>
    <variation>W</variation>
    <location>
        <position position="48"/>
    </location>
</feature>
<feature type="sequence conflict" description="In Ref. 2; AAP72168." evidence="9" ref="2">
    <original>G</original>
    <variation>A</variation>
    <location>
        <position position="166"/>
    </location>
</feature>
<feature type="sequence conflict" description="In Ref. 2; AAP72168." evidence="9" ref="2">
    <original>P</original>
    <variation>A</variation>
    <location>
        <position position="376"/>
    </location>
</feature>
<feature type="strand" evidence="10">
    <location>
        <begin position="22"/>
        <end position="25"/>
    </location>
</feature>
<feature type="strand" evidence="10">
    <location>
        <begin position="30"/>
        <end position="33"/>
    </location>
</feature>
<feature type="strand" evidence="10">
    <location>
        <begin position="38"/>
        <end position="40"/>
    </location>
</feature>
<feature type="strand" evidence="10">
    <location>
        <begin position="43"/>
        <end position="46"/>
    </location>
</feature>
<feature type="strand" evidence="10">
    <location>
        <begin position="51"/>
        <end position="55"/>
    </location>
</feature>
<feature type="strand" evidence="10">
    <location>
        <begin position="72"/>
        <end position="76"/>
    </location>
</feature>
<feature type="turn" evidence="10">
    <location>
        <begin position="78"/>
        <end position="81"/>
    </location>
</feature>
<feature type="strand" evidence="10">
    <location>
        <begin position="84"/>
        <end position="89"/>
    </location>
</feature>
<feature type="helix" evidence="10">
    <location>
        <begin position="92"/>
        <end position="94"/>
    </location>
</feature>
<feature type="strand" evidence="10">
    <location>
        <begin position="96"/>
        <end position="102"/>
    </location>
</feature>
<feature type="turn" evidence="10">
    <location>
        <begin position="103"/>
        <end position="106"/>
    </location>
</feature>
<feature type="strand" evidence="10">
    <location>
        <begin position="112"/>
        <end position="117"/>
    </location>
</feature>
<organism>
    <name type="scientific">Mus musculus</name>
    <name type="common">Mouse</name>
    <dbReference type="NCBI Taxonomy" id="10090"/>
    <lineage>
        <taxon>Eukaryota</taxon>
        <taxon>Metazoa</taxon>
        <taxon>Chordata</taxon>
        <taxon>Craniata</taxon>
        <taxon>Vertebrata</taxon>
        <taxon>Euteleostomi</taxon>
        <taxon>Mammalia</taxon>
        <taxon>Eutheria</taxon>
        <taxon>Euarchontoglires</taxon>
        <taxon>Glires</taxon>
        <taxon>Rodentia</taxon>
        <taxon>Myomorpha</taxon>
        <taxon>Muroidea</taxon>
        <taxon>Muridae</taxon>
        <taxon>Murinae</taxon>
        <taxon>Mus</taxon>
        <taxon>Mus</taxon>
    </lineage>
</organism>